<accession>A8GDR7</accession>
<comment type="function">
    <text evidence="1">Bifunctional enzyme that catalyzes the oxidative decarboxylation of UDP-glucuronic acid (UDP-GlcUA) to UDP-4-keto-arabinose (UDP-Ara4O) and the addition of a formyl group to UDP-4-amino-4-deoxy-L-arabinose (UDP-L-Ara4N) to form UDP-L-4-formamido-arabinose (UDP-L-Ara4FN). The modified arabinose is attached to lipid A and is required for resistance to polymyxin and cationic antimicrobial peptides.</text>
</comment>
<comment type="catalytic activity">
    <reaction evidence="1">
        <text>UDP-alpha-D-glucuronate + NAD(+) = UDP-beta-L-threo-pentopyranos-4-ulose + CO2 + NADH</text>
        <dbReference type="Rhea" id="RHEA:24702"/>
        <dbReference type="ChEBI" id="CHEBI:16526"/>
        <dbReference type="ChEBI" id="CHEBI:57540"/>
        <dbReference type="ChEBI" id="CHEBI:57945"/>
        <dbReference type="ChEBI" id="CHEBI:58052"/>
        <dbReference type="ChEBI" id="CHEBI:58710"/>
        <dbReference type="EC" id="1.1.1.305"/>
    </reaction>
</comment>
<comment type="catalytic activity">
    <reaction evidence="1">
        <text>UDP-4-amino-4-deoxy-beta-L-arabinose + (6R)-10-formyltetrahydrofolate = UDP-4-deoxy-4-formamido-beta-L-arabinose + (6S)-5,6,7,8-tetrahydrofolate + H(+)</text>
        <dbReference type="Rhea" id="RHEA:24706"/>
        <dbReference type="ChEBI" id="CHEBI:15378"/>
        <dbReference type="ChEBI" id="CHEBI:57453"/>
        <dbReference type="ChEBI" id="CHEBI:58708"/>
        <dbReference type="ChEBI" id="CHEBI:58709"/>
        <dbReference type="ChEBI" id="CHEBI:195366"/>
        <dbReference type="EC" id="2.1.2.13"/>
    </reaction>
</comment>
<comment type="pathway">
    <text evidence="1">Nucleotide-sugar biosynthesis; UDP-4-deoxy-4-formamido-beta-L-arabinose biosynthesis; UDP-4-deoxy-4-formamido-beta-L-arabinose from UDP-alpha-D-glucuronate: step 1/3.</text>
</comment>
<comment type="pathway">
    <text evidence="1">Nucleotide-sugar biosynthesis; UDP-4-deoxy-4-formamido-beta-L-arabinose biosynthesis; UDP-4-deoxy-4-formamido-beta-L-arabinose from UDP-alpha-D-glucuronate: step 3/3.</text>
</comment>
<comment type="pathway">
    <text evidence="1">Bacterial outer membrane biogenesis; lipopolysaccharide biosynthesis.</text>
</comment>
<comment type="subunit">
    <text evidence="1">Homohexamer, formed by a dimer of trimers.</text>
</comment>
<comment type="similarity">
    <text evidence="1">In the N-terminal section; belongs to the Fmt family. UDP-L-Ara4N formyltransferase subfamily.</text>
</comment>
<comment type="similarity">
    <text evidence="1">In the C-terminal section; belongs to the NAD(P)-dependent epimerase/dehydratase family. UDP-glucuronic acid decarboxylase subfamily.</text>
</comment>
<evidence type="ECO:0000255" key="1">
    <source>
        <dbReference type="HAMAP-Rule" id="MF_01166"/>
    </source>
</evidence>
<gene>
    <name evidence="1" type="primary">arnA</name>
    <name type="ordered locus">Spro_2156</name>
</gene>
<name>ARNA_SERP5</name>
<reference key="1">
    <citation type="submission" date="2007-09" db="EMBL/GenBank/DDBJ databases">
        <title>Complete sequence of chromosome of Serratia proteamaculans 568.</title>
        <authorList>
            <consortium name="US DOE Joint Genome Institute"/>
            <person name="Copeland A."/>
            <person name="Lucas S."/>
            <person name="Lapidus A."/>
            <person name="Barry K."/>
            <person name="Glavina del Rio T."/>
            <person name="Dalin E."/>
            <person name="Tice H."/>
            <person name="Pitluck S."/>
            <person name="Chain P."/>
            <person name="Malfatti S."/>
            <person name="Shin M."/>
            <person name="Vergez L."/>
            <person name="Schmutz J."/>
            <person name="Larimer F."/>
            <person name="Land M."/>
            <person name="Hauser L."/>
            <person name="Kyrpides N."/>
            <person name="Kim E."/>
            <person name="Taghavi S."/>
            <person name="Newman L."/>
            <person name="Vangronsveld J."/>
            <person name="van der Lelie D."/>
            <person name="Richardson P."/>
        </authorList>
    </citation>
    <scope>NUCLEOTIDE SEQUENCE [LARGE SCALE GENOMIC DNA]</scope>
    <source>
        <strain>568</strain>
    </source>
</reference>
<feature type="chain" id="PRO_1000065679" description="Bifunctional polymyxin resistance protein ArnA">
    <location>
        <begin position="1"/>
        <end position="660"/>
    </location>
</feature>
<feature type="region of interest" description="Formyltransferase ArnAFT">
    <location>
        <begin position="1"/>
        <end position="304"/>
    </location>
</feature>
<feature type="region of interest" description="Dehydrogenase ArnADH">
    <location>
        <begin position="314"/>
        <end position="660"/>
    </location>
</feature>
<feature type="active site" description="Proton donor; for formyltransferase activity" evidence="1">
    <location>
        <position position="104"/>
    </location>
</feature>
<feature type="active site" description="Proton acceptor; for decarboxylase activity" evidence="1">
    <location>
        <position position="434"/>
    </location>
</feature>
<feature type="active site" description="Proton donor; for decarboxylase activity" evidence="1">
    <location>
        <position position="619"/>
    </location>
</feature>
<feature type="binding site" evidence="1">
    <location>
        <position position="114"/>
    </location>
    <ligand>
        <name>(6R)-10-formyltetrahydrofolate</name>
        <dbReference type="ChEBI" id="CHEBI:195366"/>
    </ligand>
</feature>
<feature type="binding site" evidence="1">
    <location>
        <begin position="136"/>
        <end position="140"/>
    </location>
    <ligand>
        <name>(6R)-10-formyltetrahydrofolate</name>
        <dbReference type="ChEBI" id="CHEBI:195366"/>
    </ligand>
</feature>
<feature type="binding site" evidence="1">
    <location>
        <position position="347"/>
    </location>
    <ligand>
        <name>NAD(+)</name>
        <dbReference type="ChEBI" id="CHEBI:57540"/>
    </ligand>
</feature>
<feature type="binding site" evidence="1">
    <location>
        <begin position="368"/>
        <end position="369"/>
    </location>
    <ligand>
        <name>NAD(+)</name>
        <dbReference type="ChEBI" id="CHEBI:57540"/>
    </ligand>
</feature>
<feature type="binding site" evidence="1">
    <location>
        <position position="393"/>
    </location>
    <ligand>
        <name>UDP-alpha-D-glucuronate</name>
        <dbReference type="ChEBI" id="CHEBI:58052"/>
    </ligand>
</feature>
<feature type="binding site" evidence="1">
    <location>
        <position position="398"/>
    </location>
    <ligand>
        <name>UDP-alpha-D-glucuronate</name>
        <dbReference type="ChEBI" id="CHEBI:58052"/>
    </ligand>
</feature>
<feature type="binding site" evidence="1">
    <location>
        <begin position="432"/>
        <end position="433"/>
    </location>
    <ligand>
        <name>UDP-alpha-D-glucuronate</name>
        <dbReference type="ChEBI" id="CHEBI:58052"/>
    </ligand>
</feature>
<feature type="binding site" evidence="1">
    <location>
        <position position="460"/>
    </location>
    <ligand>
        <name>UDP-alpha-D-glucuronate</name>
        <dbReference type="ChEBI" id="CHEBI:58052"/>
    </ligand>
</feature>
<feature type="binding site" evidence="1">
    <location>
        <position position="492"/>
    </location>
    <ligand>
        <name>UDP-alpha-D-glucuronate</name>
        <dbReference type="ChEBI" id="CHEBI:58052"/>
    </ligand>
</feature>
<feature type="binding site" evidence="1">
    <location>
        <begin position="526"/>
        <end position="535"/>
    </location>
    <ligand>
        <name>UDP-alpha-D-glucuronate</name>
        <dbReference type="ChEBI" id="CHEBI:58052"/>
    </ligand>
</feature>
<feature type="binding site" evidence="1">
    <location>
        <position position="613"/>
    </location>
    <ligand>
        <name>UDP-alpha-D-glucuronate</name>
        <dbReference type="ChEBI" id="CHEBI:58052"/>
    </ligand>
</feature>
<feature type="site" description="Transition state stabilizer" evidence="1">
    <location>
        <position position="102"/>
    </location>
</feature>
<feature type="site" description="Raises pKa of active site His" evidence="1">
    <location>
        <position position="140"/>
    </location>
</feature>
<protein>
    <recommendedName>
        <fullName evidence="1">Bifunctional polymyxin resistance protein ArnA</fullName>
    </recommendedName>
    <domain>
        <recommendedName>
            <fullName evidence="1">UDP-4-amino-4-deoxy-L-arabinose formyltransferase</fullName>
            <ecNumber evidence="1">2.1.2.13</ecNumber>
        </recommendedName>
        <alternativeName>
            <fullName evidence="1">ArnAFT</fullName>
        </alternativeName>
        <alternativeName>
            <fullName evidence="1">UDP-L-Ara4N formyltransferase</fullName>
        </alternativeName>
    </domain>
    <domain>
        <recommendedName>
            <fullName evidence="1">UDP-glucuronic acid oxidase, UDP-4-keto-hexauronic acid decarboxylating</fullName>
            <ecNumber evidence="1">1.1.1.305</ecNumber>
        </recommendedName>
        <alternativeName>
            <fullName evidence="1">ArnADH</fullName>
        </alternativeName>
        <alternativeName>
            <fullName evidence="1">UDP-GlcUA decarboxylase</fullName>
        </alternativeName>
        <alternativeName>
            <fullName evidence="1">UDP-glucuronic acid dehydrogenase</fullName>
        </alternativeName>
    </domain>
</protein>
<organism>
    <name type="scientific">Serratia proteamaculans (strain 568)</name>
    <dbReference type="NCBI Taxonomy" id="399741"/>
    <lineage>
        <taxon>Bacteria</taxon>
        <taxon>Pseudomonadati</taxon>
        <taxon>Pseudomonadota</taxon>
        <taxon>Gammaproteobacteria</taxon>
        <taxon>Enterobacterales</taxon>
        <taxon>Yersiniaceae</taxon>
        <taxon>Serratia</taxon>
    </lineage>
</organism>
<sequence>MKAIVFAYHDIGCAGLKALTDAGYDIQAVFTHTDDPGENNFFSSVARVGAELELPVYAPEDVNHPLWIERIREMQPDIIFSFYYRNMLSEELLSLAPKGGFNLHGSLLPHYRGRAPVNWALVNGETETGATLHKMVKRPDAGDIVGQHKVAIAANDTALTLHKKVLEAAQALLKEQLPKLKNGTASFTRQNEAEASYFGRRTAADGEILWHKSAQEINNLVRAVTEPYPGAFSYLGQRKLIVWRARVLDTRHDKQPGTVLSTSPLIIACGEGALEIVAGQNDVGLYVQGSRLAQEMGIVTDVRLAAKPNAVMKRRTRVLILGVNGFIGNHLTERLLRDDRYDIYGLDIGSDAISRFLGNPRFHFVEGDISIHSEWIEYHIKKCDVILPLVAIATPIEYTRNPLRVFELDFEENLKIVRDCVKYNKRIIFPSTSEVYGMCDDKEFDEDHSRLIVGPINKQRWIYSVSKQLLDRVIWAYGAKEGLKFTLFRPFNWMGPRLDNLDAARIGSSRAITQLILNLVEGSPIKLMDGGAQKRCFTDINDGIEALFRIIENRDGLCDGQIVNIGNPTNEASIRELAEMLLESFNNHPLRDRFPPFAGFKDVESSSYYGKGYQDVEHRTPSIKNARRLLDWQPTIAMQQTVADTLDYFLRTTVQEGDGA</sequence>
<proteinExistence type="inferred from homology"/>
<dbReference type="EC" id="2.1.2.13" evidence="1"/>
<dbReference type="EC" id="1.1.1.305" evidence="1"/>
<dbReference type="EMBL" id="CP000826">
    <property type="protein sequence ID" value="ABV41257.1"/>
    <property type="molecule type" value="Genomic_DNA"/>
</dbReference>
<dbReference type="SMR" id="A8GDR7"/>
<dbReference type="STRING" id="399741.Spro_2156"/>
<dbReference type="KEGG" id="spe:Spro_2156"/>
<dbReference type="eggNOG" id="COG0223">
    <property type="taxonomic scope" value="Bacteria"/>
</dbReference>
<dbReference type="eggNOG" id="COG0451">
    <property type="taxonomic scope" value="Bacteria"/>
</dbReference>
<dbReference type="HOGENOM" id="CLU_007383_23_1_6"/>
<dbReference type="OrthoDB" id="9802815at2"/>
<dbReference type="UniPathway" id="UPA00030"/>
<dbReference type="UniPathway" id="UPA00032">
    <property type="reaction ID" value="UER00492"/>
</dbReference>
<dbReference type="UniPathway" id="UPA00032">
    <property type="reaction ID" value="UER00494"/>
</dbReference>
<dbReference type="GO" id="GO:0016020">
    <property type="term" value="C:membrane"/>
    <property type="evidence" value="ECO:0007669"/>
    <property type="project" value="GOC"/>
</dbReference>
<dbReference type="GO" id="GO:0016831">
    <property type="term" value="F:carboxy-lyase activity"/>
    <property type="evidence" value="ECO:0007669"/>
    <property type="project" value="InterPro"/>
</dbReference>
<dbReference type="GO" id="GO:0099619">
    <property type="term" value="F:UDP-4-amino-4-deoxy-L-arabinose formyltransferase activity"/>
    <property type="evidence" value="ECO:0007669"/>
    <property type="project" value="UniProtKB-EC"/>
</dbReference>
<dbReference type="GO" id="GO:0099618">
    <property type="term" value="F:UDP-glucuronate dehydrogenase activity"/>
    <property type="evidence" value="ECO:0007669"/>
    <property type="project" value="UniProtKB-EC"/>
</dbReference>
<dbReference type="GO" id="GO:0009245">
    <property type="term" value="P:lipid A biosynthetic process"/>
    <property type="evidence" value="ECO:0007669"/>
    <property type="project" value="UniProtKB-KW"/>
</dbReference>
<dbReference type="GO" id="GO:0009103">
    <property type="term" value="P:lipopolysaccharide biosynthetic process"/>
    <property type="evidence" value="ECO:0007669"/>
    <property type="project" value="UniProtKB-UniRule"/>
</dbReference>
<dbReference type="GO" id="GO:0046677">
    <property type="term" value="P:response to antibiotic"/>
    <property type="evidence" value="ECO:0007669"/>
    <property type="project" value="UniProtKB-KW"/>
</dbReference>
<dbReference type="CDD" id="cd08702">
    <property type="entry name" value="Arna_FMT_C"/>
    <property type="match status" value="1"/>
</dbReference>
<dbReference type="CDD" id="cd05257">
    <property type="entry name" value="Arna_like_SDR_e"/>
    <property type="match status" value="1"/>
</dbReference>
<dbReference type="FunFam" id="3.40.50.720:FF:000197">
    <property type="entry name" value="Bifunctional polymyxin resistance protein ArnA"/>
    <property type="match status" value="1"/>
</dbReference>
<dbReference type="Gene3D" id="3.40.50.12230">
    <property type="match status" value="1"/>
</dbReference>
<dbReference type="Gene3D" id="3.40.50.720">
    <property type="entry name" value="NAD(P)-binding Rossmann-like Domain"/>
    <property type="match status" value="1"/>
</dbReference>
<dbReference type="HAMAP" id="MF_01166">
    <property type="entry name" value="ArnA"/>
    <property type="match status" value="1"/>
</dbReference>
<dbReference type="InterPro" id="IPR045869">
    <property type="entry name" value="Arna-like_SDR_e"/>
</dbReference>
<dbReference type="InterPro" id="IPR021168">
    <property type="entry name" value="Bifun_polymyxin_resist_ArnA"/>
</dbReference>
<dbReference type="InterPro" id="IPR001509">
    <property type="entry name" value="Epimerase_deHydtase"/>
</dbReference>
<dbReference type="InterPro" id="IPR005793">
    <property type="entry name" value="Formyl_trans_C"/>
</dbReference>
<dbReference type="InterPro" id="IPR002376">
    <property type="entry name" value="Formyl_transf_N"/>
</dbReference>
<dbReference type="InterPro" id="IPR036477">
    <property type="entry name" value="Formyl_transf_N_sf"/>
</dbReference>
<dbReference type="InterPro" id="IPR011034">
    <property type="entry name" value="Formyl_transferase-like_C_sf"/>
</dbReference>
<dbReference type="InterPro" id="IPR050177">
    <property type="entry name" value="Lipid_A_modif_metabolic_enz"/>
</dbReference>
<dbReference type="InterPro" id="IPR036291">
    <property type="entry name" value="NAD(P)-bd_dom_sf"/>
</dbReference>
<dbReference type="NCBIfam" id="NF005414">
    <property type="entry name" value="PRK06988.1"/>
    <property type="match status" value="1"/>
</dbReference>
<dbReference type="NCBIfam" id="NF005998">
    <property type="entry name" value="PRK08125.1"/>
    <property type="match status" value="1"/>
</dbReference>
<dbReference type="NCBIfam" id="NF008872">
    <property type="entry name" value="PRK11908.1"/>
    <property type="match status" value="1"/>
</dbReference>
<dbReference type="PANTHER" id="PTHR43245">
    <property type="entry name" value="BIFUNCTIONAL POLYMYXIN RESISTANCE PROTEIN ARNA"/>
    <property type="match status" value="1"/>
</dbReference>
<dbReference type="PANTHER" id="PTHR43245:SF13">
    <property type="entry name" value="UDP-D-APIOSE_UDP-D-XYLOSE SYNTHASE 2"/>
    <property type="match status" value="1"/>
</dbReference>
<dbReference type="Pfam" id="PF01370">
    <property type="entry name" value="Epimerase"/>
    <property type="match status" value="1"/>
</dbReference>
<dbReference type="Pfam" id="PF02911">
    <property type="entry name" value="Formyl_trans_C"/>
    <property type="match status" value="1"/>
</dbReference>
<dbReference type="Pfam" id="PF00551">
    <property type="entry name" value="Formyl_trans_N"/>
    <property type="match status" value="1"/>
</dbReference>
<dbReference type="PIRSF" id="PIRSF036506">
    <property type="entry name" value="Bifun_polymyxin_resist_ArnA"/>
    <property type="match status" value="1"/>
</dbReference>
<dbReference type="SUPFAM" id="SSF50486">
    <property type="entry name" value="FMT C-terminal domain-like"/>
    <property type="match status" value="1"/>
</dbReference>
<dbReference type="SUPFAM" id="SSF53328">
    <property type="entry name" value="Formyltransferase"/>
    <property type="match status" value="1"/>
</dbReference>
<dbReference type="SUPFAM" id="SSF51735">
    <property type="entry name" value="NAD(P)-binding Rossmann-fold domains"/>
    <property type="match status" value="1"/>
</dbReference>
<keyword id="KW-0046">Antibiotic resistance</keyword>
<keyword id="KW-0441">Lipid A biosynthesis</keyword>
<keyword id="KW-0444">Lipid biosynthesis</keyword>
<keyword id="KW-0443">Lipid metabolism</keyword>
<keyword id="KW-0448">Lipopolysaccharide biosynthesis</keyword>
<keyword id="KW-0511">Multifunctional enzyme</keyword>
<keyword id="KW-0520">NAD</keyword>
<keyword id="KW-0560">Oxidoreductase</keyword>
<keyword id="KW-0808">Transferase</keyword>